<feature type="chain" id="PRO_0000088207" description="GRB2-related adapter protein">
    <location>
        <begin position="1"/>
        <end position="217"/>
    </location>
</feature>
<feature type="domain" description="SH3 1" evidence="4">
    <location>
        <begin position="1"/>
        <end position="58"/>
    </location>
</feature>
<feature type="domain" description="SH2" evidence="3">
    <location>
        <begin position="60"/>
        <end position="152"/>
    </location>
</feature>
<feature type="domain" description="SH3 2" evidence="4">
    <location>
        <begin position="158"/>
        <end position="217"/>
    </location>
</feature>
<sequence length="217" mass="25277">MESVALYSFQATESDELAFNKGDTLKILNMEDDQNWYKAELRGAEGFVPKNYIRVKPHPWYSGRISRQLAEETLMKRNHLGAFLIRESESSPGEFSVSVNYGDQVQHFKVLREASGKYFLWEEKFNSLNELVDFYRTTTIAKRRQIFLCDEQPLIKPSRACFAQAQFDFSAQDPSQLSLRRGDIVEVVEREDPHWWRGRAGGRLGFFPRSYVQPVHL</sequence>
<dbReference type="EMBL" id="AK018457">
    <property type="protein sequence ID" value="BAB31222.1"/>
    <property type="molecule type" value="mRNA"/>
</dbReference>
<dbReference type="EMBL" id="AK153888">
    <property type="protein sequence ID" value="BAE32235.1"/>
    <property type="molecule type" value="mRNA"/>
</dbReference>
<dbReference type="EMBL" id="AL596209">
    <property type="status" value="NOT_ANNOTATED_CDS"/>
    <property type="molecule type" value="Genomic_DNA"/>
</dbReference>
<dbReference type="EMBL" id="BC120674">
    <property type="protein sequence ID" value="AAI20675.1"/>
    <property type="molecule type" value="mRNA"/>
</dbReference>
<dbReference type="EMBL" id="BC120676">
    <property type="protein sequence ID" value="AAI20677.1"/>
    <property type="molecule type" value="mRNA"/>
</dbReference>
<dbReference type="CCDS" id="CCDS24817.1"/>
<dbReference type="RefSeq" id="NP_082093.1">
    <property type="nucleotide sequence ID" value="NM_027817.3"/>
</dbReference>
<dbReference type="SMR" id="Q9CX99"/>
<dbReference type="BioGRID" id="214755">
    <property type="interactions" value="1"/>
</dbReference>
<dbReference type="FunCoup" id="Q9CX99">
    <property type="interactions" value="502"/>
</dbReference>
<dbReference type="IntAct" id="Q9CX99">
    <property type="interactions" value="4"/>
</dbReference>
<dbReference type="STRING" id="10090.ENSMUSP00000004959"/>
<dbReference type="iPTMnet" id="Q9CX99"/>
<dbReference type="PhosphoSitePlus" id="Q9CX99"/>
<dbReference type="PaxDb" id="10090-ENSMUSP00000004959"/>
<dbReference type="ProteomicsDB" id="271290"/>
<dbReference type="DNASU" id="71520"/>
<dbReference type="Ensembl" id="ENSMUST00000004959.3">
    <property type="protein sequence ID" value="ENSMUSP00000004959.3"/>
    <property type="gene ID" value="ENSMUSG00000004837.3"/>
</dbReference>
<dbReference type="GeneID" id="71520"/>
<dbReference type="KEGG" id="mmu:71520"/>
<dbReference type="UCSC" id="uc007jhz.1">
    <property type="organism name" value="mouse"/>
</dbReference>
<dbReference type="AGR" id="MGI:1918770"/>
<dbReference type="CTD" id="10750"/>
<dbReference type="MGI" id="MGI:1918770">
    <property type="gene designation" value="Grap"/>
</dbReference>
<dbReference type="VEuPathDB" id="HostDB:ENSMUSG00000004837"/>
<dbReference type="eggNOG" id="KOG3601">
    <property type="taxonomic scope" value="Eukaryota"/>
</dbReference>
<dbReference type="GeneTree" id="ENSGT00940000156254"/>
<dbReference type="HOGENOM" id="CLU_073617_1_0_1"/>
<dbReference type="InParanoid" id="Q9CX99"/>
<dbReference type="OMA" id="NKGDMLK"/>
<dbReference type="OrthoDB" id="10255964at2759"/>
<dbReference type="PhylomeDB" id="Q9CX99"/>
<dbReference type="TreeFam" id="TF354288"/>
<dbReference type="Reactome" id="R-MMU-1433557">
    <property type="pathway name" value="Signaling by SCF-KIT"/>
</dbReference>
<dbReference type="BioGRID-ORCS" id="71520">
    <property type="hits" value="2 hits in 79 CRISPR screens"/>
</dbReference>
<dbReference type="ChiTaRS" id="Grap">
    <property type="organism name" value="mouse"/>
</dbReference>
<dbReference type="PRO" id="PR:Q9CX99"/>
<dbReference type="Proteomes" id="UP000000589">
    <property type="component" value="Chromosome 11"/>
</dbReference>
<dbReference type="RNAct" id="Q9CX99">
    <property type="molecule type" value="protein"/>
</dbReference>
<dbReference type="Bgee" id="ENSMUSG00000004837">
    <property type="expression patterns" value="Expressed in mesenteric lymph node and 116 other cell types or tissues"/>
</dbReference>
<dbReference type="GO" id="GO:0016020">
    <property type="term" value="C:membrane"/>
    <property type="evidence" value="ECO:0007669"/>
    <property type="project" value="UniProtKB-SubCell"/>
</dbReference>
<dbReference type="GO" id="GO:0098793">
    <property type="term" value="C:presynapse"/>
    <property type="evidence" value="ECO:0000250"/>
    <property type="project" value="UniProtKB"/>
</dbReference>
<dbReference type="GO" id="GO:0007605">
    <property type="term" value="P:sensory perception of sound"/>
    <property type="evidence" value="ECO:0000250"/>
    <property type="project" value="UniProtKB"/>
</dbReference>
<dbReference type="CDD" id="cd09941">
    <property type="entry name" value="SH2_Grb2_like"/>
    <property type="match status" value="1"/>
</dbReference>
<dbReference type="CDD" id="cd11948">
    <property type="entry name" value="SH3_GRAP_N"/>
    <property type="match status" value="1"/>
</dbReference>
<dbReference type="FunFam" id="2.30.30.40:FF:000076">
    <property type="entry name" value="Growth factor receptor-bound protein 2"/>
    <property type="match status" value="1"/>
</dbReference>
<dbReference type="FunFam" id="3.30.505.10:FF:000022">
    <property type="entry name" value="Growth factor receptor-bound protein 2"/>
    <property type="match status" value="1"/>
</dbReference>
<dbReference type="Gene3D" id="3.30.505.10">
    <property type="entry name" value="SH2 domain"/>
    <property type="match status" value="1"/>
</dbReference>
<dbReference type="Gene3D" id="2.30.30.40">
    <property type="entry name" value="SH3 Domains"/>
    <property type="match status" value="2"/>
</dbReference>
<dbReference type="InterPro" id="IPR035645">
    <property type="entry name" value="GRAP_N_SH3"/>
</dbReference>
<dbReference type="InterPro" id="IPR043539">
    <property type="entry name" value="Grb2-like"/>
</dbReference>
<dbReference type="InterPro" id="IPR000980">
    <property type="entry name" value="SH2"/>
</dbReference>
<dbReference type="InterPro" id="IPR036860">
    <property type="entry name" value="SH2_dom_sf"/>
</dbReference>
<dbReference type="InterPro" id="IPR036028">
    <property type="entry name" value="SH3-like_dom_sf"/>
</dbReference>
<dbReference type="InterPro" id="IPR001452">
    <property type="entry name" value="SH3_domain"/>
</dbReference>
<dbReference type="PANTHER" id="PTHR46037">
    <property type="entry name" value="PROTEIN ENHANCER OF SEVENLESS 2B"/>
    <property type="match status" value="1"/>
</dbReference>
<dbReference type="Pfam" id="PF00017">
    <property type="entry name" value="SH2"/>
    <property type="match status" value="1"/>
</dbReference>
<dbReference type="Pfam" id="PF00018">
    <property type="entry name" value="SH3_1"/>
    <property type="match status" value="2"/>
</dbReference>
<dbReference type="PRINTS" id="PR00499">
    <property type="entry name" value="P67PHOX"/>
</dbReference>
<dbReference type="PRINTS" id="PR00401">
    <property type="entry name" value="SH2DOMAIN"/>
</dbReference>
<dbReference type="PRINTS" id="PR00452">
    <property type="entry name" value="SH3DOMAIN"/>
</dbReference>
<dbReference type="SMART" id="SM00252">
    <property type="entry name" value="SH2"/>
    <property type="match status" value="1"/>
</dbReference>
<dbReference type="SMART" id="SM00326">
    <property type="entry name" value="SH3"/>
    <property type="match status" value="2"/>
</dbReference>
<dbReference type="SUPFAM" id="SSF55550">
    <property type="entry name" value="SH2 domain"/>
    <property type="match status" value="1"/>
</dbReference>
<dbReference type="SUPFAM" id="SSF50044">
    <property type="entry name" value="SH3-domain"/>
    <property type="match status" value="2"/>
</dbReference>
<dbReference type="PROSITE" id="PS50001">
    <property type="entry name" value="SH2"/>
    <property type="match status" value="1"/>
</dbReference>
<dbReference type="PROSITE" id="PS50002">
    <property type="entry name" value="SH3"/>
    <property type="match status" value="2"/>
</dbReference>
<reference key="1">
    <citation type="journal article" date="2005" name="Science">
        <title>The transcriptional landscape of the mammalian genome.</title>
        <authorList>
            <person name="Carninci P."/>
            <person name="Kasukawa T."/>
            <person name="Katayama S."/>
            <person name="Gough J."/>
            <person name="Frith M.C."/>
            <person name="Maeda N."/>
            <person name="Oyama R."/>
            <person name="Ravasi T."/>
            <person name="Lenhard B."/>
            <person name="Wells C."/>
            <person name="Kodzius R."/>
            <person name="Shimokawa K."/>
            <person name="Bajic V.B."/>
            <person name="Brenner S.E."/>
            <person name="Batalov S."/>
            <person name="Forrest A.R."/>
            <person name="Zavolan M."/>
            <person name="Davis M.J."/>
            <person name="Wilming L.G."/>
            <person name="Aidinis V."/>
            <person name="Allen J.E."/>
            <person name="Ambesi-Impiombato A."/>
            <person name="Apweiler R."/>
            <person name="Aturaliya R.N."/>
            <person name="Bailey T.L."/>
            <person name="Bansal M."/>
            <person name="Baxter L."/>
            <person name="Beisel K.W."/>
            <person name="Bersano T."/>
            <person name="Bono H."/>
            <person name="Chalk A.M."/>
            <person name="Chiu K.P."/>
            <person name="Choudhary V."/>
            <person name="Christoffels A."/>
            <person name="Clutterbuck D.R."/>
            <person name="Crowe M.L."/>
            <person name="Dalla E."/>
            <person name="Dalrymple B.P."/>
            <person name="de Bono B."/>
            <person name="Della Gatta G."/>
            <person name="di Bernardo D."/>
            <person name="Down T."/>
            <person name="Engstrom P."/>
            <person name="Fagiolini M."/>
            <person name="Faulkner G."/>
            <person name="Fletcher C.F."/>
            <person name="Fukushima T."/>
            <person name="Furuno M."/>
            <person name="Futaki S."/>
            <person name="Gariboldi M."/>
            <person name="Georgii-Hemming P."/>
            <person name="Gingeras T.R."/>
            <person name="Gojobori T."/>
            <person name="Green R.E."/>
            <person name="Gustincich S."/>
            <person name="Harbers M."/>
            <person name="Hayashi Y."/>
            <person name="Hensch T.K."/>
            <person name="Hirokawa N."/>
            <person name="Hill D."/>
            <person name="Huminiecki L."/>
            <person name="Iacono M."/>
            <person name="Ikeo K."/>
            <person name="Iwama A."/>
            <person name="Ishikawa T."/>
            <person name="Jakt M."/>
            <person name="Kanapin A."/>
            <person name="Katoh M."/>
            <person name="Kawasawa Y."/>
            <person name="Kelso J."/>
            <person name="Kitamura H."/>
            <person name="Kitano H."/>
            <person name="Kollias G."/>
            <person name="Krishnan S.P."/>
            <person name="Kruger A."/>
            <person name="Kummerfeld S.K."/>
            <person name="Kurochkin I.V."/>
            <person name="Lareau L.F."/>
            <person name="Lazarevic D."/>
            <person name="Lipovich L."/>
            <person name="Liu J."/>
            <person name="Liuni S."/>
            <person name="McWilliam S."/>
            <person name="Madan Babu M."/>
            <person name="Madera M."/>
            <person name="Marchionni L."/>
            <person name="Matsuda H."/>
            <person name="Matsuzawa S."/>
            <person name="Miki H."/>
            <person name="Mignone F."/>
            <person name="Miyake S."/>
            <person name="Morris K."/>
            <person name="Mottagui-Tabar S."/>
            <person name="Mulder N."/>
            <person name="Nakano N."/>
            <person name="Nakauchi H."/>
            <person name="Ng P."/>
            <person name="Nilsson R."/>
            <person name="Nishiguchi S."/>
            <person name="Nishikawa S."/>
            <person name="Nori F."/>
            <person name="Ohara O."/>
            <person name="Okazaki Y."/>
            <person name="Orlando V."/>
            <person name="Pang K.C."/>
            <person name="Pavan W.J."/>
            <person name="Pavesi G."/>
            <person name="Pesole G."/>
            <person name="Petrovsky N."/>
            <person name="Piazza S."/>
            <person name="Reed J."/>
            <person name="Reid J.F."/>
            <person name="Ring B.Z."/>
            <person name="Ringwald M."/>
            <person name="Rost B."/>
            <person name="Ruan Y."/>
            <person name="Salzberg S.L."/>
            <person name="Sandelin A."/>
            <person name="Schneider C."/>
            <person name="Schoenbach C."/>
            <person name="Sekiguchi K."/>
            <person name="Semple C.A."/>
            <person name="Seno S."/>
            <person name="Sessa L."/>
            <person name="Sheng Y."/>
            <person name="Shibata Y."/>
            <person name="Shimada H."/>
            <person name="Shimada K."/>
            <person name="Silva D."/>
            <person name="Sinclair B."/>
            <person name="Sperling S."/>
            <person name="Stupka E."/>
            <person name="Sugiura K."/>
            <person name="Sultana R."/>
            <person name="Takenaka Y."/>
            <person name="Taki K."/>
            <person name="Tammoja K."/>
            <person name="Tan S.L."/>
            <person name="Tang S."/>
            <person name="Taylor M.S."/>
            <person name="Tegner J."/>
            <person name="Teichmann S.A."/>
            <person name="Ueda H.R."/>
            <person name="van Nimwegen E."/>
            <person name="Verardo R."/>
            <person name="Wei C.L."/>
            <person name="Yagi K."/>
            <person name="Yamanishi H."/>
            <person name="Zabarovsky E."/>
            <person name="Zhu S."/>
            <person name="Zimmer A."/>
            <person name="Hide W."/>
            <person name="Bult C."/>
            <person name="Grimmond S.M."/>
            <person name="Teasdale R.D."/>
            <person name="Liu E.T."/>
            <person name="Brusic V."/>
            <person name="Quackenbush J."/>
            <person name="Wahlestedt C."/>
            <person name="Mattick J.S."/>
            <person name="Hume D.A."/>
            <person name="Kai C."/>
            <person name="Sasaki D."/>
            <person name="Tomaru Y."/>
            <person name="Fukuda S."/>
            <person name="Kanamori-Katayama M."/>
            <person name="Suzuki M."/>
            <person name="Aoki J."/>
            <person name="Arakawa T."/>
            <person name="Iida J."/>
            <person name="Imamura K."/>
            <person name="Itoh M."/>
            <person name="Kato T."/>
            <person name="Kawaji H."/>
            <person name="Kawagashira N."/>
            <person name="Kawashima T."/>
            <person name="Kojima M."/>
            <person name="Kondo S."/>
            <person name="Konno H."/>
            <person name="Nakano K."/>
            <person name="Ninomiya N."/>
            <person name="Nishio T."/>
            <person name="Okada M."/>
            <person name="Plessy C."/>
            <person name="Shibata K."/>
            <person name="Shiraki T."/>
            <person name="Suzuki S."/>
            <person name="Tagami M."/>
            <person name="Waki K."/>
            <person name="Watahiki A."/>
            <person name="Okamura-Oho Y."/>
            <person name="Suzuki H."/>
            <person name="Kawai J."/>
            <person name="Hayashizaki Y."/>
        </authorList>
    </citation>
    <scope>NUCLEOTIDE SEQUENCE [LARGE SCALE MRNA]</scope>
    <source>
        <strain>C57BL/6J</strain>
        <strain>NOD</strain>
        <tissue>Lung</tissue>
        <tissue>Thymus</tissue>
    </source>
</reference>
<reference key="2">
    <citation type="journal article" date="2009" name="PLoS Biol.">
        <title>Lineage-specific biology revealed by a finished genome assembly of the mouse.</title>
        <authorList>
            <person name="Church D.M."/>
            <person name="Goodstadt L."/>
            <person name="Hillier L.W."/>
            <person name="Zody M.C."/>
            <person name="Goldstein S."/>
            <person name="She X."/>
            <person name="Bult C.J."/>
            <person name="Agarwala R."/>
            <person name="Cherry J.L."/>
            <person name="DiCuccio M."/>
            <person name="Hlavina W."/>
            <person name="Kapustin Y."/>
            <person name="Meric P."/>
            <person name="Maglott D."/>
            <person name="Birtle Z."/>
            <person name="Marques A.C."/>
            <person name="Graves T."/>
            <person name="Zhou S."/>
            <person name="Teague B."/>
            <person name="Potamousis K."/>
            <person name="Churas C."/>
            <person name="Place M."/>
            <person name="Herschleb J."/>
            <person name="Runnheim R."/>
            <person name="Forrest D."/>
            <person name="Amos-Landgraf J."/>
            <person name="Schwartz D.C."/>
            <person name="Cheng Z."/>
            <person name="Lindblad-Toh K."/>
            <person name="Eichler E.E."/>
            <person name="Ponting C.P."/>
        </authorList>
    </citation>
    <scope>NUCLEOTIDE SEQUENCE [LARGE SCALE GENOMIC DNA]</scope>
    <source>
        <strain>C57BL/6J</strain>
    </source>
</reference>
<reference key="3">
    <citation type="journal article" date="2004" name="Genome Res.">
        <title>The status, quality, and expansion of the NIH full-length cDNA project: the Mammalian Gene Collection (MGC).</title>
        <authorList>
            <consortium name="The MGC Project Team"/>
        </authorList>
    </citation>
    <scope>NUCLEOTIDE SEQUENCE [LARGE SCALE MRNA]</scope>
    <source>
        <tissue>Brain</tissue>
    </source>
</reference>
<reference key="4">
    <citation type="journal article" date="2010" name="Cell">
        <title>A tissue-specific atlas of mouse protein phosphorylation and expression.</title>
        <authorList>
            <person name="Huttlin E.L."/>
            <person name="Jedrychowski M.P."/>
            <person name="Elias J.E."/>
            <person name="Goswami T."/>
            <person name="Rad R."/>
            <person name="Beausoleil S.A."/>
            <person name="Villen J."/>
            <person name="Haas W."/>
            <person name="Sowa M.E."/>
            <person name="Gygi S.P."/>
        </authorList>
    </citation>
    <scope>IDENTIFICATION BY MASS SPECTROMETRY [LARGE SCALE ANALYSIS]</scope>
    <source>
        <tissue>Spleen</tissue>
    </source>
</reference>
<reference key="5">
    <citation type="journal article" date="2019" name="Proc. Natl. Acad. Sci. U.S.A.">
        <title>Dysfunction of GRAP, encoding the GRB2-related adaptor protein, is linked to sensorineural hearing loss.</title>
        <authorList>
            <person name="Li C."/>
            <person name="Bademci G."/>
            <person name="Subasioglu A."/>
            <person name="Diaz-Horta O."/>
            <person name="Zhu Y."/>
            <person name="Liu J."/>
            <person name="Mitchell T.G."/>
            <person name="Abad C."/>
            <person name="Seyhan S."/>
            <person name="Duman D."/>
            <person name="Cengiz F.B."/>
            <person name="Tokgoz-Yilmaz S."/>
            <person name="Blanton S.H."/>
            <person name="Farooq A."/>
            <person name="Walz K."/>
            <person name="Zhai R.G."/>
            <person name="Tekin M."/>
        </authorList>
    </citation>
    <scope>TISSUE SPECIFICITY</scope>
</reference>
<evidence type="ECO:0000250" key="1">
    <source>
        <dbReference type="UniProtKB" id="Q08012"/>
    </source>
</evidence>
<evidence type="ECO:0000250" key="2">
    <source>
        <dbReference type="UniProtKB" id="Q13588"/>
    </source>
</evidence>
<evidence type="ECO:0000255" key="3">
    <source>
        <dbReference type="PROSITE-ProRule" id="PRU00191"/>
    </source>
</evidence>
<evidence type="ECO:0000255" key="4">
    <source>
        <dbReference type="PROSITE-ProRule" id="PRU00192"/>
    </source>
</evidence>
<evidence type="ECO:0000269" key="5">
    <source>
    </source>
</evidence>
<evidence type="ECO:0000305" key="6"/>
<evidence type="ECO:0000312" key="7">
    <source>
        <dbReference type="MGI" id="MGI:1918770"/>
    </source>
</evidence>
<accession>Q9CX99</accession>
<accession>Q0VBE3</accession>
<accession>Q3U545</accession>
<name>GRAP_MOUSE</name>
<keyword id="KW-0472">Membrane</keyword>
<keyword id="KW-1185">Reference proteome</keyword>
<keyword id="KW-0677">Repeat</keyword>
<keyword id="KW-0727">SH2 domain</keyword>
<keyword id="KW-0728">SH3 domain</keyword>
<keyword id="KW-0770">Synapse</keyword>
<organism>
    <name type="scientific">Mus musculus</name>
    <name type="common">Mouse</name>
    <dbReference type="NCBI Taxonomy" id="10090"/>
    <lineage>
        <taxon>Eukaryota</taxon>
        <taxon>Metazoa</taxon>
        <taxon>Chordata</taxon>
        <taxon>Craniata</taxon>
        <taxon>Vertebrata</taxon>
        <taxon>Euteleostomi</taxon>
        <taxon>Mammalia</taxon>
        <taxon>Eutheria</taxon>
        <taxon>Euarchontoglires</taxon>
        <taxon>Glires</taxon>
        <taxon>Rodentia</taxon>
        <taxon>Myomorpha</taxon>
        <taxon>Muroidea</taxon>
        <taxon>Muridae</taxon>
        <taxon>Murinae</taxon>
        <taxon>Mus</taxon>
        <taxon>Mus</taxon>
    </lineage>
</organism>
<gene>
    <name evidence="7" type="primary">Grap</name>
</gene>
<protein>
    <recommendedName>
        <fullName evidence="6">GRB2-related adapter protein</fullName>
    </recommendedName>
</protein>
<comment type="function">
    <text evidence="2">Couples signals from receptor and cytoplasmic tyrosine kinases to the Ras signaling pathway. Plays a role in the inner ear and in hearing.</text>
</comment>
<comment type="subunit">
    <text evidence="2">Associates through its SH2 domain with ligand-activated receptors for stem cell factor (KIT) and erythropoietin (EPOR). Also forms a stable complex with the Bcr-Abl oncoprotein. GRAP is associated with the Ras guanine nucleotide exchange factor SOS1, primarily through its N-terminal SH3 domain. Interacts with phosphorylated LAT upon TCR activation. Interacts with SHB (By similarity).</text>
</comment>
<comment type="subcellular location">
    <subcellularLocation>
        <location evidence="1">Membrane</location>
        <topology evidence="1">Peripheral membrane protein</topology>
    </subcellularLocation>
    <subcellularLocation>
        <location evidence="1">Synapse</location>
    </subcellularLocation>
    <text evidence="1">Localizes at the presynaptic terminal.</text>
</comment>
<comment type="tissue specificity">
    <text evidence="5">Expressed in inner ear, in neruonal fibers innervating cochlear and utricular auditory hair cells (at protein level).</text>
</comment>
<comment type="similarity">
    <text evidence="6">Belongs to the GRB2/sem-5/DRK family.</text>
</comment>
<proteinExistence type="evidence at protein level"/>